<evidence type="ECO:0000255" key="1">
    <source>
        <dbReference type="HAMAP-Rule" id="MF_01081"/>
    </source>
</evidence>
<evidence type="ECO:0000256" key="2">
    <source>
        <dbReference type="SAM" id="MobiDB-lite"/>
    </source>
</evidence>
<keyword id="KW-0413">Isomerase</keyword>
<keyword id="KW-0819">tRNA processing</keyword>
<sequence length="353" mass="39859">MIEEIQKLNGFIVIDKPQGPTSHQVDYWVRQILGTEKVGHIGTLDPNVTGVLVMAIGKAVRLIDVVHEKPKEYVGVMRFHSDISEEEVREVFRKFTTRIYQLPPVRSAVSRKVRIKTIYELDMIEKKDKIVLFHVKCESGTYIRTLCTDIGYVSGKGGQMVDLRRISTGPFKEDIAITLQDLQAYVDLAKEGKDELFRSHFLDMTYAFIDYPKIVAKKSAVENIAHGSDLYVGGVKLIDGNFQKGDRVCVLSEDNELLGTGIARCDSSNLFMKVVDFDHIFVEAKHGKGDVVRDREKDVQRPGQQVHRNIRDAAHGPDSRTGRGRKETGPQIAPNRVRKLQNKTGVHRRPGSH</sequence>
<accession>Q97BU9</accession>
<dbReference type="EC" id="5.4.99.25" evidence="1"/>
<dbReference type="EMBL" id="BA000011">
    <property type="protein sequence ID" value="BAB59498.1"/>
    <property type="molecule type" value="Genomic_DNA"/>
</dbReference>
<dbReference type="RefSeq" id="WP_010916610.1">
    <property type="nucleotide sequence ID" value="NC_002689.2"/>
</dbReference>
<dbReference type="SMR" id="Q97BU9"/>
<dbReference type="STRING" id="273116.gene:9381133"/>
<dbReference type="PaxDb" id="273116-14324571"/>
<dbReference type="GeneID" id="1440868"/>
<dbReference type="KEGG" id="tvo:TVG0348240"/>
<dbReference type="eggNOG" id="arCOG00987">
    <property type="taxonomic scope" value="Archaea"/>
</dbReference>
<dbReference type="HOGENOM" id="CLU_032087_3_0_2"/>
<dbReference type="OrthoDB" id="35866at2157"/>
<dbReference type="PhylomeDB" id="Q97BU9"/>
<dbReference type="Proteomes" id="UP000001017">
    <property type="component" value="Chromosome"/>
</dbReference>
<dbReference type="GO" id="GO:0003723">
    <property type="term" value="F:RNA binding"/>
    <property type="evidence" value="ECO:0007669"/>
    <property type="project" value="InterPro"/>
</dbReference>
<dbReference type="GO" id="GO:0160148">
    <property type="term" value="F:tRNA pseudouridine(55) synthase activity"/>
    <property type="evidence" value="ECO:0007669"/>
    <property type="project" value="UniProtKB-EC"/>
</dbReference>
<dbReference type="GO" id="GO:0000495">
    <property type="term" value="P:box H/ACA sno(s)RNA 3'-end processing"/>
    <property type="evidence" value="ECO:0007669"/>
    <property type="project" value="TreeGrafter"/>
</dbReference>
<dbReference type="GO" id="GO:1990481">
    <property type="term" value="P:mRNA pseudouridine synthesis"/>
    <property type="evidence" value="ECO:0007669"/>
    <property type="project" value="TreeGrafter"/>
</dbReference>
<dbReference type="GO" id="GO:0031118">
    <property type="term" value="P:rRNA pseudouridine synthesis"/>
    <property type="evidence" value="ECO:0007669"/>
    <property type="project" value="TreeGrafter"/>
</dbReference>
<dbReference type="GO" id="GO:0031120">
    <property type="term" value="P:snRNA pseudouridine synthesis"/>
    <property type="evidence" value="ECO:0007669"/>
    <property type="project" value="TreeGrafter"/>
</dbReference>
<dbReference type="GO" id="GO:0031119">
    <property type="term" value="P:tRNA pseudouridine synthesis"/>
    <property type="evidence" value="ECO:0007669"/>
    <property type="project" value="UniProtKB-UniRule"/>
</dbReference>
<dbReference type="CDD" id="cd07953">
    <property type="entry name" value="PUA"/>
    <property type="match status" value="1"/>
</dbReference>
<dbReference type="Gene3D" id="3.30.2350.10">
    <property type="entry name" value="Pseudouridine synthase"/>
    <property type="match status" value="1"/>
</dbReference>
<dbReference type="Gene3D" id="2.30.130.10">
    <property type="entry name" value="PUA domain"/>
    <property type="match status" value="1"/>
</dbReference>
<dbReference type="HAMAP" id="MF_01081">
    <property type="entry name" value="TruB_arch"/>
    <property type="match status" value="1"/>
</dbReference>
<dbReference type="InterPro" id="IPR012960">
    <property type="entry name" value="Dyskerin-like"/>
</dbReference>
<dbReference type="InterPro" id="IPR020103">
    <property type="entry name" value="PsdUridine_synth_cat_dom_sf"/>
</dbReference>
<dbReference type="InterPro" id="IPR002501">
    <property type="entry name" value="PsdUridine_synth_N"/>
</dbReference>
<dbReference type="InterPro" id="IPR002478">
    <property type="entry name" value="PUA"/>
</dbReference>
<dbReference type="InterPro" id="IPR015947">
    <property type="entry name" value="PUA-like_sf"/>
</dbReference>
<dbReference type="InterPro" id="IPR036974">
    <property type="entry name" value="PUA_sf"/>
</dbReference>
<dbReference type="InterPro" id="IPR004802">
    <property type="entry name" value="tRNA_PsdUridine_synth_B_fam"/>
</dbReference>
<dbReference type="InterPro" id="IPR026326">
    <property type="entry name" value="TruB_arch"/>
</dbReference>
<dbReference type="InterPro" id="IPR032819">
    <property type="entry name" value="TruB_C"/>
</dbReference>
<dbReference type="NCBIfam" id="TIGR00425">
    <property type="entry name" value="CBF5"/>
    <property type="match status" value="1"/>
</dbReference>
<dbReference type="NCBIfam" id="NF003280">
    <property type="entry name" value="PRK04270.1"/>
    <property type="match status" value="1"/>
</dbReference>
<dbReference type="PANTHER" id="PTHR23127">
    <property type="entry name" value="CENTROMERE/MICROTUBULE BINDING PROTEIN CBF5"/>
    <property type="match status" value="1"/>
</dbReference>
<dbReference type="PANTHER" id="PTHR23127:SF0">
    <property type="entry name" value="H_ACA RIBONUCLEOPROTEIN COMPLEX SUBUNIT DKC1"/>
    <property type="match status" value="1"/>
</dbReference>
<dbReference type="Pfam" id="PF01472">
    <property type="entry name" value="PUA"/>
    <property type="match status" value="1"/>
</dbReference>
<dbReference type="Pfam" id="PF16198">
    <property type="entry name" value="TruB_C_2"/>
    <property type="match status" value="1"/>
</dbReference>
<dbReference type="Pfam" id="PF01509">
    <property type="entry name" value="TruB_N"/>
    <property type="match status" value="1"/>
</dbReference>
<dbReference type="SMART" id="SM01136">
    <property type="entry name" value="DKCLD"/>
    <property type="match status" value="1"/>
</dbReference>
<dbReference type="SMART" id="SM00359">
    <property type="entry name" value="PUA"/>
    <property type="match status" value="1"/>
</dbReference>
<dbReference type="SUPFAM" id="SSF55120">
    <property type="entry name" value="Pseudouridine synthase"/>
    <property type="match status" value="1"/>
</dbReference>
<dbReference type="SUPFAM" id="SSF88697">
    <property type="entry name" value="PUA domain-like"/>
    <property type="match status" value="1"/>
</dbReference>
<dbReference type="PROSITE" id="PS50890">
    <property type="entry name" value="PUA"/>
    <property type="match status" value="1"/>
</dbReference>
<gene>
    <name evidence="1" type="primary">truB</name>
    <name type="ordered locus">TV0356</name>
    <name type="ORF">TVG0348240</name>
</gene>
<comment type="function">
    <text evidence="1">Could be responsible for synthesis of pseudouridine from uracil-55 in the psi GC loop of transfer RNAs.</text>
</comment>
<comment type="catalytic activity">
    <reaction evidence="1">
        <text>uridine(55) in tRNA = pseudouridine(55) in tRNA</text>
        <dbReference type="Rhea" id="RHEA:42532"/>
        <dbReference type="Rhea" id="RHEA-COMP:10101"/>
        <dbReference type="Rhea" id="RHEA-COMP:10102"/>
        <dbReference type="ChEBI" id="CHEBI:65314"/>
        <dbReference type="ChEBI" id="CHEBI:65315"/>
        <dbReference type="EC" id="5.4.99.25"/>
    </reaction>
</comment>
<comment type="similarity">
    <text evidence="1">Belongs to the pseudouridine synthase TruB family. Type 2 subfamily.</text>
</comment>
<protein>
    <recommendedName>
        <fullName evidence="1">Probable tRNA pseudouridine synthase B</fullName>
        <ecNumber evidence="1">5.4.99.25</ecNumber>
    </recommendedName>
    <alternativeName>
        <fullName evidence="1">tRNA pseudouridine(55) synthase</fullName>
        <shortName evidence="1">Psi55 synthase</shortName>
    </alternativeName>
    <alternativeName>
        <fullName evidence="1">tRNA pseudouridylate synthase</fullName>
    </alternativeName>
    <alternativeName>
        <fullName evidence="1">tRNA-uridine isomerase</fullName>
    </alternativeName>
</protein>
<proteinExistence type="inferred from homology"/>
<reference key="1">
    <citation type="journal article" date="2000" name="Proc. Natl. Acad. Sci. U.S.A.">
        <title>Archaeal adaptation to higher temperatures revealed by genomic sequence of Thermoplasma volcanium.</title>
        <authorList>
            <person name="Kawashima T."/>
            <person name="Amano N."/>
            <person name="Koike H."/>
            <person name="Makino S."/>
            <person name="Higuchi S."/>
            <person name="Kawashima-Ohya Y."/>
            <person name="Watanabe K."/>
            <person name="Yamazaki M."/>
            <person name="Kanehori K."/>
            <person name="Kawamoto T."/>
            <person name="Nunoshiba T."/>
            <person name="Yamamoto Y."/>
            <person name="Aramaki H."/>
            <person name="Makino K."/>
            <person name="Suzuki M."/>
        </authorList>
    </citation>
    <scope>NUCLEOTIDE SEQUENCE [LARGE SCALE GENOMIC DNA]</scope>
    <source>
        <strain>ATCC 51530 / DSM 4299 / JCM 9571 / NBRC 15438 / GSS1</strain>
    </source>
</reference>
<name>TRUB_THEVO</name>
<feature type="chain" id="PRO_0000121974" description="Probable tRNA pseudouridine synthase B">
    <location>
        <begin position="1"/>
        <end position="353"/>
    </location>
</feature>
<feature type="domain" description="PUA" evidence="1">
    <location>
        <begin position="211"/>
        <end position="287"/>
    </location>
</feature>
<feature type="region of interest" description="Disordered" evidence="2">
    <location>
        <begin position="292"/>
        <end position="353"/>
    </location>
</feature>
<feature type="compositionally biased region" description="Basic and acidic residues" evidence="2">
    <location>
        <begin position="309"/>
        <end position="328"/>
    </location>
</feature>
<feature type="compositionally biased region" description="Basic residues" evidence="2">
    <location>
        <begin position="336"/>
        <end position="353"/>
    </location>
</feature>
<feature type="active site" description="Nucleophile" evidence="1">
    <location>
        <position position="45"/>
    </location>
</feature>
<organism>
    <name type="scientific">Thermoplasma volcanium (strain ATCC 51530 / DSM 4299 / JCM 9571 / NBRC 15438 / GSS1)</name>
    <dbReference type="NCBI Taxonomy" id="273116"/>
    <lineage>
        <taxon>Archaea</taxon>
        <taxon>Methanobacteriati</taxon>
        <taxon>Thermoplasmatota</taxon>
        <taxon>Thermoplasmata</taxon>
        <taxon>Thermoplasmatales</taxon>
        <taxon>Thermoplasmataceae</taxon>
        <taxon>Thermoplasma</taxon>
    </lineage>
</organism>